<proteinExistence type="inferred from homology"/>
<protein>
    <recommendedName>
        <fullName evidence="1">Probable transcriptional regulatory protein Athe_0816</fullName>
    </recommendedName>
</protein>
<evidence type="ECO:0000255" key="1">
    <source>
        <dbReference type="HAMAP-Rule" id="MF_00693"/>
    </source>
</evidence>
<sequence>MAGHSKWANIKHKKEKTDAQKGKLFTKLGRELMVVAKMYGPDPETNPKLRDVIAKAKANNMPMDKIMGFIKRAAGEIDTTGYEDITYEGYGPGGVAVIVEAMTNNRNRTAGELRHIFDKNGGNLGQTGCVSWMFSRKGVIVIEKESFPDEDFVMEKALEYGAEDFTSENGIYEIITSPEDFSKVREGLEKEGFTFIRAQIEMIPQTYVKLSSEDAQKMRRLIDMLEDNDDVKEVYHNWEEDEE</sequence>
<keyword id="KW-0963">Cytoplasm</keyword>
<keyword id="KW-0238">DNA-binding</keyword>
<keyword id="KW-0804">Transcription</keyword>
<keyword id="KW-0805">Transcription regulation</keyword>
<feature type="chain" id="PRO_1000200071" description="Probable transcriptional regulatory protein Athe_0816">
    <location>
        <begin position="1"/>
        <end position="243"/>
    </location>
</feature>
<name>Y816_CALBD</name>
<accession>B9MQH7</accession>
<reference key="1">
    <citation type="submission" date="2009-01" db="EMBL/GenBank/DDBJ databases">
        <title>Complete sequence of chromosome of Caldicellulosiruptor becscii DSM 6725.</title>
        <authorList>
            <person name="Lucas S."/>
            <person name="Copeland A."/>
            <person name="Lapidus A."/>
            <person name="Glavina del Rio T."/>
            <person name="Tice H."/>
            <person name="Bruce D."/>
            <person name="Goodwin L."/>
            <person name="Pitluck S."/>
            <person name="Sims D."/>
            <person name="Meincke L."/>
            <person name="Brettin T."/>
            <person name="Detter J.C."/>
            <person name="Han C."/>
            <person name="Larimer F."/>
            <person name="Land M."/>
            <person name="Hauser L."/>
            <person name="Kyrpides N."/>
            <person name="Ovchinnikova G."/>
            <person name="Kataeva I."/>
            <person name="Adams M.W.W."/>
        </authorList>
    </citation>
    <scope>NUCLEOTIDE SEQUENCE [LARGE SCALE GENOMIC DNA]</scope>
    <source>
        <strain>ATCC BAA-1888 / DSM 6725 / KCTC 15123 / Z-1320</strain>
    </source>
</reference>
<comment type="subcellular location">
    <subcellularLocation>
        <location evidence="1">Cytoplasm</location>
    </subcellularLocation>
</comment>
<comment type="similarity">
    <text evidence="1">Belongs to the TACO1 family.</text>
</comment>
<organism>
    <name type="scientific">Caldicellulosiruptor bescii (strain ATCC BAA-1888 / DSM 6725 / KCTC 15123 / Z-1320)</name>
    <name type="common">Anaerocellum thermophilum</name>
    <dbReference type="NCBI Taxonomy" id="521460"/>
    <lineage>
        <taxon>Bacteria</taxon>
        <taxon>Bacillati</taxon>
        <taxon>Bacillota</taxon>
        <taxon>Bacillota incertae sedis</taxon>
        <taxon>Caldicellulosiruptorales</taxon>
        <taxon>Caldicellulosiruptoraceae</taxon>
        <taxon>Caldicellulosiruptor</taxon>
    </lineage>
</organism>
<dbReference type="EMBL" id="CP001393">
    <property type="protein sequence ID" value="ACM59931.1"/>
    <property type="molecule type" value="Genomic_DNA"/>
</dbReference>
<dbReference type="RefSeq" id="WP_015907361.1">
    <property type="nucleotide sequence ID" value="NC_012034.1"/>
</dbReference>
<dbReference type="SMR" id="B9MQH7"/>
<dbReference type="STRING" id="521460.Athe_0816"/>
<dbReference type="GeneID" id="31772171"/>
<dbReference type="KEGG" id="ate:Athe_0816"/>
<dbReference type="eggNOG" id="COG0217">
    <property type="taxonomic scope" value="Bacteria"/>
</dbReference>
<dbReference type="HOGENOM" id="CLU_062974_2_2_9"/>
<dbReference type="Proteomes" id="UP000007723">
    <property type="component" value="Chromosome"/>
</dbReference>
<dbReference type="GO" id="GO:0005829">
    <property type="term" value="C:cytosol"/>
    <property type="evidence" value="ECO:0007669"/>
    <property type="project" value="TreeGrafter"/>
</dbReference>
<dbReference type="GO" id="GO:0003677">
    <property type="term" value="F:DNA binding"/>
    <property type="evidence" value="ECO:0007669"/>
    <property type="project" value="UniProtKB-UniRule"/>
</dbReference>
<dbReference type="GO" id="GO:0006355">
    <property type="term" value="P:regulation of DNA-templated transcription"/>
    <property type="evidence" value="ECO:0007669"/>
    <property type="project" value="UniProtKB-UniRule"/>
</dbReference>
<dbReference type="FunFam" id="1.10.10.200:FF:000002">
    <property type="entry name" value="Probable transcriptional regulatory protein CLM62_37755"/>
    <property type="match status" value="1"/>
</dbReference>
<dbReference type="FunFam" id="3.30.70.980:FF:000002">
    <property type="entry name" value="Probable transcriptional regulatory protein YebC"/>
    <property type="match status" value="1"/>
</dbReference>
<dbReference type="Gene3D" id="1.10.10.200">
    <property type="match status" value="1"/>
</dbReference>
<dbReference type="Gene3D" id="3.30.70.980">
    <property type="match status" value="2"/>
</dbReference>
<dbReference type="HAMAP" id="MF_00693">
    <property type="entry name" value="Transcrip_reg_TACO1"/>
    <property type="match status" value="1"/>
</dbReference>
<dbReference type="InterPro" id="IPR017856">
    <property type="entry name" value="Integrase-like_N"/>
</dbReference>
<dbReference type="InterPro" id="IPR048300">
    <property type="entry name" value="TACO1_YebC-like_2nd/3rd_dom"/>
</dbReference>
<dbReference type="InterPro" id="IPR049083">
    <property type="entry name" value="TACO1_YebC_N"/>
</dbReference>
<dbReference type="InterPro" id="IPR002876">
    <property type="entry name" value="Transcrip_reg_TACO1-like"/>
</dbReference>
<dbReference type="InterPro" id="IPR026564">
    <property type="entry name" value="Transcrip_reg_TACO1-like_dom3"/>
</dbReference>
<dbReference type="InterPro" id="IPR029072">
    <property type="entry name" value="YebC-like"/>
</dbReference>
<dbReference type="NCBIfam" id="NF001030">
    <property type="entry name" value="PRK00110.1"/>
    <property type="match status" value="1"/>
</dbReference>
<dbReference type="NCBIfam" id="NF009044">
    <property type="entry name" value="PRK12378.1"/>
    <property type="match status" value="1"/>
</dbReference>
<dbReference type="NCBIfam" id="TIGR01033">
    <property type="entry name" value="YebC/PmpR family DNA-binding transcriptional regulator"/>
    <property type="match status" value="1"/>
</dbReference>
<dbReference type="PANTHER" id="PTHR12532:SF6">
    <property type="entry name" value="TRANSCRIPTIONAL REGULATORY PROTEIN YEBC-RELATED"/>
    <property type="match status" value="1"/>
</dbReference>
<dbReference type="PANTHER" id="PTHR12532">
    <property type="entry name" value="TRANSLATIONAL ACTIVATOR OF CYTOCHROME C OXIDASE 1"/>
    <property type="match status" value="1"/>
</dbReference>
<dbReference type="Pfam" id="PF20772">
    <property type="entry name" value="TACO1_YebC_N"/>
    <property type="match status" value="1"/>
</dbReference>
<dbReference type="Pfam" id="PF01709">
    <property type="entry name" value="Transcrip_reg"/>
    <property type="match status" value="1"/>
</dbReference>
<dbReference type="SUPFAM" id="SSF75625">
    <property type="entry name" value="YebC-like"/>
    <property type="match status" value="1"/>
</dbReference>
<gene>
    <name type="ordered locus">Athe_0816</name>
</gene>